<name>NUSB_NITWN</name>
<proteinExistence type="inferred from homology"/>
<sequence length="161" mass="17824">MADIKASIDRKANRRGAARLAAVQALYQMEIGGAGINDVFAEFDSHWLGNEVEGDRYLPAEAAFFRDVVAGVVRDQVRIDPLIDDALSKSWPLKRVAAILRAVLRAGSYELEHRKDVPARVVVSEYVDVAHAFVEKDEAGMVNAVLDQIARRFRTGEFARG</sequence>
<evidence type="ECO:0000255" key="1">
    <source>
        <dbReference type="HAMAP-Rule" id="MF_00073"/>
    </source>
</evidence>
<accession>Q3SRV8</accession>
<keyword id="KW-1185">Reference proteome</keyword>
<keyword id="KW-0694">RNA-binding</keyword>
<keyword id="KW-0804">Transcription</keyword>
<keyword id="KW-0889">Transcription antitermination</keyword>
<keyword id="KW-0805">Transcription regulation</keyword>
<feature type="chain" id="PRO_0000265551" description="Transcription antitermination protein NusB">
    <location>
        <begin position="1"/>
        <end position="161"/>
    </location>
</feature>
<dbReference type="EMBL" id="CP000115">
    <property type="protein sequence ID" value="ABA04983.1"/>
    <property type="molecule type" value="Genomic_DNA"/>
</dbReference>
<dbReference type="RefSeq" id="WP_011314979.1">
    <property type="nucleotide sequence ID" value="NC_007406.1"/>
</dbReference>
<dbReference type="SMR" id="Q3SRV8"/>
<dbReference type="STRING" id="323098.Nwi_1722"/>
<dbReference type="KEGG" id="nwi:Nwi_1722"/>
<dbReference type="eggNOG" id="COG0781">
    <property type="taxonomic scope" value="Bacteria"/>
</dbReference>
<dbReference type="HOGENOM" id="CLU_087843_4_0_5"/>
<dbReference type="OrthoDB" id="9797817at2"/>
<dbReference type="Proteomes" id="UP000002531">
    <property type="component" value="Chromosome"/>
</dbReference>
<dbReference type="GO" id="GO:0005829">
    <property type="term" value="C:cytosol"/>
    <property type="evidence" value="ECO:0007669"/>
    <property type="project" value="TreeGrafter"/>
</dbReference>
<dbReference type="GO" id="GO:0003723">
    <property type="term" value="F:RNA binding"/>
    <property type="evidence" value="ECO:0007669"/>
    <property type="project" value="UniProtKB-UniRule"/>
</dbReference>
<dbReference type="GO" id="GO:0006353">
    <property type="term" value="P:DNA-templated transcription termination"/>
    <property type="evidence" value="ECO:0007669"/>
    <property type="project" value="UniProtKB-UniRule"/>
</dbReference>
<dbReference type="GO" id="GO:0031564">
    <property type="term" value="P:transcription antitermination"/>
    <property type="evidence" value="ECO:0007669"/>
    <property type="project" value="UniProtKB-KW"/>
</dbReference>
<dbReference type="Gene3D" id="1.10.940.10">
    <property type="entry name" value="NusB-like"/>
    <property type="match status" value="1"/>
</dbReference>
<dbReference type="HAMAP" id="MF_00073">
    <property type="entry name" value="NusB"/>
    <property type="match status" value="1"/>
</dbReference>
<dbReference type="InterPro" id="IPR035926">
    <property type="entry name" value="NusB-like_sf"/>
</dbReference>
<dbReference type="InterPro" id="IPR011605">
    <property type="entry name" value="NusB_fam"/>
</dbReference>
<dbReference type="InterPro" id="IPR006027">
    <property type="entry name" value="NusB_RsmB_TIM44"/>
</dbReference>
<dbReference type="NCBIfam" id="TIGR01951">
    <property type="entry name" value="nusB"/>
    <property type="match status" value="1"/>
</dbReference>
<dbReference type="PANTHER" id="PTHR11078:SF3">
    <property type="entry name" value="ANTITERMINATION NUSB DOMAIN-CONTAINING PROTEIN"/>
    <property type="match status" value="1"/>
</dbReference>
<dbReference type="PANTHER" id="PTHR11078">
    <property type="entry name" value="N UTILIZATION SUBSTANCE PROTEIN B-RELATED"/>
    <property type="match status" value="1"/>
</dbReference>
<dbReference type="Pfam" id="PF01029">
    <property type="entry name" value="NusB"/>
    <property type="match status" value="1"/>
</dbReference>
<dbReference type="SUPFAM" id="SSF48013">
    <property type="entry name" value="NusB-like"/>
    <property type="match status" value="1"/>
</dbReference>
<gene>
    <name evidence="1" type="primary">nusB</name>
    <name type="ordered locus">Nwi_1722</name>
</gene>
<organism>
    <name type="scientific">Nitrobacter winogradskyi (strain ATCC 25391 / DSM 10237 / CIP 104748 / NCIMB 11846 / Nb-255)</name>
    <dbReference type="NCBI Taxonomy" id="323098"/>
    <lineage>
        <taxon>Bacteria</taxon>
        <taxon>Pseudomonadati</taxon>
        <taxon>Pseudomonadota</taxon>
        <taxon>Alphaproteobacteria</taxon>
        <taxon>Hyphomicrobiales</taxon>
        <taxon>Nitrobacteraceae</taxon>
        <taxon>Nitrobacter</taxon>
    </lineage>
</organism>
<reference key="1">
    <citation type="journal article" date="2006" name="Appl. Environ. Microbiol.">
        <title>Genome sequence of the chemolithoautotrophic nitrite-oxidizing bacterium Nitrobacter winogradskyi Nb-255.</title>
        <authorList>
            <person name="Starkenburg S.R."/>
            <person name="Chain P.S.G."/>
            <person name="Sayavedra-Soto L.A."/>
            <person name="Hauser L."/>
            <person name="Land M.L."/>
            <person name="Larimer F.W."/>
            <person name="Malfatti S.A."/>
            <person name="Klotz M.G."/>
            <person name="Bottomley P.J."/>
            <person name="Arp D.J."/>
            <person name="Hickey W.J."/>
        </authorList>
    </citation>
    <scope>NUCLEOTIDE SEQUENCE [LARGE SCALE GENOMIC DNA]</scope>
    <source>
        <strain>ATCC 25391 / DSM 10237 / CIP 104748 / NCIMB 11846 / Nb-255</strain>
    </source>
</reference>
<protein>
    <recommendedName>
        <fullName evidence="1">Transcription antitermination protein NusB</fullName>
    </recommendedName>
    <alternativeName>
        <fullName evidence="1">Antitermination factor NusB</fullName>
    </alternativeName>
</protein>
<comment type="function">
    <text evidence="1">Involved in transcription antitermination. Required for transcription of ribosomal RNA (rRNA) genes. Binds specifically to the boxA antiterminator sequence of the ribosomal RNA (rrn) operons.</text>
</comment>
<comment type="similarity">
    <text evidence="1">Belongs to the NusB family.</text>
</comment>